<keyword id="KW-0997">Cell inner membrane</keyword>
<keyword id="KW-1003">Cell membrane</keyword>
<keyword id="KW-1015">Disulfide bond</keyword>
<keyword id="KW-0350">Heme biosynthesis</keyword>
<keyword id="KW-0408">Iron</keyword>
<keyword id="KW-0472">Membrane</keyword>
<keyword id="KW-0479">Metal-binding</keyword>
<keyword id="KW-0560">Oxidoreductase</keyword>
<keyword id="KW-1185">Reference proteome</keyword>
<keyword id="KW-0812">Transmembrane</keyword>
<keyword id="KW-1133">Transmembrane helix</keyword>
<protein>
    <recommendedName>
        <fullName evidence="4">Heme A synthase</fullName>
        <shortName>HAS</shortName>
        <ecNumber evidence="1">1.17.99.9</ecNumber>
    </recommendedName>
    <alternativeName>
        <fullName>Cytochrome aa3-controlling protein</fullName>
    </alternativeName>
</protein>
<feature type="chain" id="PRO_0000460047" description="Heme A synthase">
    <location>
        <begin position="1"/>
        <end position="330"/>
    </location>
</feature>
<feature type="topological domain" description="Cytoplasmic" evidence="4">
    <location>
        <begin position="1"/>
        <end position="2"/>
    </location>
</feature>
<feature type="transmembrane region" description="Helical; Name=1" evidence="2">
    <location>
        <begin position="3"/>
        <end position="23"/>
    </location>
</feature>
<feature type="topological domain" description="Periplasmic" evidence="4">
    <location>
        <begin position="24"/>
        <end position="76"/>
    </location>
</feature>
<feature type="transmembrane region" description="Helical; Name=2" evidence="2">
    <location>
        <begin position="77"/>
        <end position="97"/>
    </location>
</feature>
<feature type="topological domain" description="Cytoplasmic" evidence="4">
    <location>
        <begin position="98"/>
        <end position="102"/>
    </location>
</feature>
<feature type="transmembrane region" description="Helical; Name=3" evidence="2">
    <location>
        <begin position="103"/>
        <end position="123"/>
    </location>
</feature>
<feature type="topological domain" description="Periplasmic" evidence="4">
    <location>
        <begin position="124"/>
        <end position="128"/>
    </location>
</feature>
<feature type="transmembrane region" description="Helical; Name=4" evidence="2">
    <location>
        <begin position="129"/>
        <end position="149"/>
    </location>
</feature>
<feature type="topological domain" description="Cytoplasmic" evidence="4">
    <location>
        <begin position="150"/>
        <end position="166"/>
    </location>
</feature>
<feature type="transmembrane region" description="Helical; Name=5" evidence="2">
    <location>
        <begin position="167"/>
        <end position="187"/>
    </location>
</feature>
<feature type="topological domain" description="Periplasmic" evidence="4">
    <location>
        <begin position="188"/>
        <end position="245"/>
    </location>
</feature>
<feature type="transmembrane region" description="Helical; Name=6" evidence="2">
    <location>
        <begin position="246"/>
        <end position="266"/>
    </location>
</feature>
<feature type="topological domain" description="Cytoplasmic" evidence="4">
    <location>
        <begin position="267"/>
        <end position="270"/>
    </location>
</feature>
<feature type="transmembrane region" description="Helical; Name=7" evidence="2">
    <location>
        <begin position="271"/>
        <end position="291"/>
    </location>
</feature>
<feature type="topological domain" description="Periplasmic" evidence="4">
    <location>
        <begin position="292"/>
        <end position="295"/>
    </location>
</feature>
<feature type="transmembrane region" description="Helical; Name=8" evidence="2">
    <location>
        <begin position="296"/>
        <end position="316"/>
    </location>
</feature>
<feature type="topological domain" description="Cytoplasmic" evidence="4">
    <location>
        <begin position="317"/>
        <end position="330"/>
    </location>
</feature>
<feature type="active site" evidence="5">
    <location>
        <position position="72"/>
    </location>
</feature>
<feature type="binding site" description="axial binding residue" evidence="1">
    <location>
        <position position="75"/>
    </location>
    <ligand>
        <name>heme o</name>
        <dbReference type="ChEBI" id="CHEBI:24480"/>
    </ligand>
    <ligandPart>
        <name>Fe</name>
        <dbReference type="ChEBI" id="CHEBI:18248"/>
    </ligandPart>
</feature>
<feature type="binding site" description="axial binding residue" evidence="1">
    <location>
        <position position="134"/>
    </location>
    <ligand>
        <name>heme o</name>
        <dbReference type="ChEBI" id="CHEBI:24480"/>
    </ligand>
    <ligandPart>
        <name>Fe</name>
        <dbReference type="ChEBI" id="CHEBI:18248"/>
    </ligandPart>
</feature>
<feature type="binding site" description="axial binding residue" evidence="1">
    <location>
        <position position="244"/>
    </location>
    <ligand>
        <name>heme b</name>
        <dbReference type="ChEBI" id="CHEBI:60344"/>
    </ligand>
    <ligandPart>
        <name>Fe</name>
        <dbReference type="ChEBI" id="CHEBI:18248"/>
    </ligandPart>
</feature>
<feature type="binding site" description="axial binding residue" evidence="1">
    <location>
        <position position="302"/>
    </location>
    <ligand>
        <name>heme b</name>
        <dbReference type="ChEBI" id="CHEBI:60344"/>
    </ligand>
    <ligandPart>
        <name>Fe</name>
        <dbReference type="ChEBI" id="CHEBI:18248"/>
    </ligandPart>
</feature>
<feature type="disulfide bond" evidence="1">
    <location>
        <begin position="33"/>
        <end position="39"/>
    </location>
</feature>
<feature type="disulfide bond" evidence="1">
    <location>
        <begin position="197"/>
        <end position="203"/>
    </location>
</feature>
<feature type="mutagenesis site" description="Completely abolishes catalytic activity." evidence="3">
    <original>E</original>
    <variation>A</variation>
    <location>
        <position position="72"/>
    </location>
</feature>
<feature type="mutagenesis site" description="Decreases protein levels. Completely abolishes catalytic activity." evidence="3">
    <original>E</original>
    <variation>A</variation>
    <location>
        <position position="72"/>
    </location>
</feature>
<feature type="mutagenesis site" description="Partially reduces catalytic activity." evidence="3">
    <original>E</original>
    <variation>D</variation>
    <location>
        <position position="72"/>
    </location>
</feature>
<feature type="mutagenesis site" description="Completely abolishes catalytic activity." evidence="3">
    <original>E</original>
    <variation>Q</variation>
    <location>
        <position position="72"/>
    </location>
</feature>
<feature type="mutagenesis site" description="Completely abolishes catalytic activity; when associated with A-134." evidence="3">
    <original>H</original>
    <variation>A</variation>
    <location>
        <position position="75"/>
    </location>
</feature>
<feature type="mutagenesis site" description="Completely abolishes catalytic activity; when associated with A-75." evidence="3">
    <original>H</original>
    <variation>A</variation>
    <location>
        <position position="134"/>
    </location>
</feature>
<feature type="mutagenesis site" description="No effect." evidence="3">
    <original>H</original>
    <variation>E</variation>
    <location>
        <position position="241"/>
    </location>
</feature>
<feature type="mutagenesis site" description="Severely decreases protein levels. Completely abolishes catalytic activity; when associated with A-302." evidence="3">
    <original>H</original>
    <variation>A</variation>
    <location>
        <position position="244"/>
    </location>
</feature>
<feature type="mutagenesis site" description="Severely decreases protein levels. Completely abolishes catalytic activity; when associated with A-244." evidence="3">
    <original>H</original>
    <variation>A</variation>
    <location>
        <position position="302"/>
    </location>
</feature>
<comment type="function">
    <text evidence="3">Catalyzes the conversion of heme O to heme A by two successive hydroxylations of the methyl group at C8. The first hydroxylation forms heme I, the second hydroxylation results in an unstable dihydroxymethyl group, which spontaneously dehydrates, resulting in the formyl group of heme A.</text>
</comment>
<comment type="catalytic activity">
    <reaction evidence="5">
        <text>Fe(II)-heme o + 2 A + H2O = Fe(II)-heme a + 2 AH2</text>
        <dbReference type="Rhea" id="RHEA:63388"/>
        <dbReference type="ChEBI" id="CHEBI:13193"/>
        <dbReference type="ChEBI" id="CHEBI:15377"/>
        <dbReference type="ChEBI" id="CHEBI:17499"/>
        <dbReference type="ChEBI" id="CHEBI:60530"/>
        <dbReference type="ChEBI" id="CHEBI:61715"/>
        <dbReference type="EC" id="1.17.99.9"/>
    </reaction>
    <physiologicalReaction direction="left-to-right" evidence="5">
        <dbReference type="Rhea" id="RHEA:63389"/>
    </physiologicalReaction>
</comment>
<comment type="cofactor">
    <cofactor evidence="1">
        <name>heme b</name>
        <dbReference type="ChEBI" id="CHEBI:60344"/>
    </cofactor>
</comment>
<comment type="pathway">
    <text evidence="1">Porphyrin-containing compound metabolism; heme A biosynthesis; heme A from heme O: step 1/1.</text>
</comment>
<comment type="subunit">
    <text evidence="1">Interacts with CtaB.</text>
</comment>
<comment type="subcellular location">
    <subcellularLocation>
        <location evidence="3">Cell inner membrane</location>
        <topology evidence="2">Multi-pass membrane protein</topology>
    </subcellularLocation>
</comment>
<comment type="domain">
    <text evidence="1">The N-half (TM1-TM4) and C-half (TM5-TM8) domains are connected by an intracellular loop. Each domain is formed from four-helix bundles and they align in a pseudo twofold symmetry manner. The N-half domain is the substrate-heme O binding domain and the C-half domain is the cofactor heme B binding domain.</text>
</comment>
<comment type="domain">
    <text evidence="1">The cysteines of disulfide bond Cys-33 and Cys-39 may be involved in transfer of reducing equivalents from quinol in the membrane to the active site of the enzyme.</text>
</comment>
<comment type="similarity">
    <text evidence="4">Belongs to the COX15/CtaA family. Type 1 subfamily.</text>
</comment>
<reference key="1">
    <citation type="journal article" date="2002" name="Nat. Biotechnol.">
        <title>Genome sequence of the dissimilatory metal ion-reducing bacterium Shewanella oneidensis.</title>
        <authorList>
            <person name="Heidelberg J.F."/>
            <person name="Paulsen I.T."/>
            <person name="Nelson K.E."/>
            <person name="Gaidos E.J."/>
            <person name="Nelson W.C."/>
            <person name="Read T.D."/>
            <person name="Eisen J.A."/>
            <person name="Seshadri R."/>
            <person name="Ward N.L."/>
            <person name="Methe B.A."/>
            <person name="Clayton R.A."/>
            <person name="Meyer T."/>
            <person name="Tsapin A."/>
            <person name="Scott J."/>
            <person name="Beanan M.J."/>
            <person name="Brinkac L.M."/>
            <person name="Daugherty S.C."/>
            <person name="DeBoy R.T."/>
            <person name="Dodson R.J."/>
            <person name="Durkin A.S."/>
            <person name="Haft D.H."/>
            <person name="Kolonay J.F."/>
            <person name="Madupu R."/>
            <person name="Peterson J.D."/>
            <person name="Umayam L.A."/>
            <person name="White O."/>
            <person name="Wolf A.M."/>
            <person name="Vamathevan J.J."/>
            <person name="Weidman J.F."/>
            <person name="Impraim M."/>
            <person name="Lee K."/>
            <person name="Berry K.J."/>
            <person name="Lee C."/>
            <person name="Mueller J."/>
            <person name="Khouri H.M."/>
            <person name="Gill J."/>
            <person name="Utterback T.R."/>
            <person name="McDonald L.A."/>
            <person name="Feldblyum T.V."/>
            <person name="Smith H.O."/>
            <person name="Venter J.C."/>
            <person name="Nealson K.H."/>
            <person name="Fraser C.M."/>
        </authorList>
    </citation>
    <scope>NUCLEOTIDE SEQUENCE [LARGE SCALE GENOMIC DNA]</scope>
    <source>
        <strain>ATCC 700550 / JCM 31522 / CIP 106686 / LMG 19005 / NCIMB 14063 / MR-1</strain>
    </source>
</reference>
<reference key="2">
    <citation type="journal article" date="2023" name="Arch. Biochem. Biophys.">
        <title>Evidence that the catalytic mechanism of heme a synthase involves the formation of a carbocation stabilized by a conserved glutamate.</title>
        <authorList>
            <person name="Rivett E.D."/>
            <person name="Addis H.G."/>
            <person name="Dietz J.V."/>
            <person name="Carroll-Deaton J.A."/>
            <person name="Gupta S."/>
            <person name="Foreman K.L."/>
            <person name="Dang M.A."/>
            <person name="Fox J.L."/>
            <person name="Khalimonchuk O."/>
            <person name="Hegg E.L."/>
        </authorList>
    </citation>
    <scope>FUNCTION</scope>
    <scope>SUBCELLULAR LOCATION</scope>
    <scope>MUTAGENESIS OF GLU-72; HIS-75; HIS-134; HIS-241; HIS-244 AND HIS-302</scope>
</reference>
<accession>Q8E8P8</accession>
<evidence type="ECO:0000250" key="1">
    <source>
        <dbReference type="UniProtKB" id="P12946"/>
    </source>
</evidence>
<evidence type="ECO:0000255" key="2"/>
<evidence type="ECO:0000269" key="3">
    <source>
    </source>
</evidence>
<evidence type="ECO:0000305" key="4"/>
<evidence type="ECO:0000305" key="5">
    <source>
    </source>
</evidence>
<name>CTAA_SHEON</name>
<dbReference type="EC" id="1.17.99.9" evidence="1"/>
<dbReference type="EMBL" id="AE014299">
    <property type="protein sequence ID" value="AAN57573.1"/>
    <property type="molecule type" value="Genomic_DNA"/>
</dbReference>
<dbReference type="RefSeq" id="NP_720129.1">
    <property type="nucleotide sequence ID" value="NC_004347.2"/>
</dbReference>
<dbReference type="RefSeq" id="WP_011074209.1">
    <property type="nucleotide sequence ID" value="NC_004347.2"/>
</dbReference>
<dbReference type="SMR" id="Q8E8P8"/>
<dbReference type="STRING" id="211586.SO_4613"/>
<dbReference type="PaxDb" id="211586-SO_4613"/>
<dbReference type="DNASU" id="1172196"/>
<dbReference type="KEGG" id="son:SO_4613"/>
<dbReference type="PATRIC" id="fig|211586.12.peg.4470"/>
<dbReference type="eggNOG" id="COG1612">
    <property type="taxonomic scope" value="Bacteria"/>
</dbReference>
<dbReference type="HOGENOM" id="CLU_041525_0_0_6"/>
<dbReference type="OrthoDB" id="1447144at2"/>
<dbReference type="PhylomeDB" id="Q8E8P8"/>
<dbReference type="BioCyc" id="SONE211586:G1GMP-4262-MONOMER"/>
<dbReference type="UniPathway" id="UPA00269">
    <property type="reaction ID" value="UER00713"/>
</dbReference>
<dbReference type="Proteomes" id="UP000008186">
    <property type="component" value="Chromosome"/>
</dbReference>
<dbReference type="GO" id="GO:0005886">
    <property type="term" value="C:plasma membrane"/>
    <property type="evidence" value="ECO:0007669"/>
    <property type="project" value="UniProtKB-SubCell"/>
</dbReference>
<dbReference type="GO" id="GO:0046872">
    <property type="term" value="F:metal ion binding"/>
    <property type="evidence" value="ECO:0007669"/>
    <property type="project" value="UniProtKB-KW"/>
</dbReference>
<dbReference type="GO" id="GO:0016653">
    <property type="term" value="F:oxidoreductase activity, acting on NAD(P)H, heme protein as acceptor"/>
    <property type="evidence" value="ECO:0007669"/>
    <property type="project" value="InterPro"/>
</dbReference>
<dbReference type="GO" id="GO:0006784">
    <property type="term" value="P:heme A biosynthetic process"/>
    <property type="evidence" value="ECO:0007669"/>
    <property type="project" value="UniProtKB-UniPathway"/>
</dbReference>
<dbReference type="InterPro" id="IPR003780">
    <property type="entry name" value="COX15/CtaA_fam"/>
</dbReference>
<dbReference type="InterPro" id="IPR050450">
    <property type="entry name" value="COX15/CtaA_HemeA_synthase"/>
</dbReference>
<dbReference type="PANTHER" id="PTHR35457">
    <property type="entry name" value="HEME A SYNTHASE"/>
    <property type="match status" value="1"/>
</dbReference>
<dbReference type="PANTHER" id="PTHR35457:SF1">
    <property type="entry name" value="HEME A SYNTHASE"/>
    <property type="match status" value="1"/>
</dbReference>
<dbReference type="Pfam" id="PF02628">
    <property type="entry name" value="COX15-CtaA"/>
    <property type="match status" value="1"/>
</dbReference>
<organism>
    <name type="scientific">Shewanella oneidensis (strain ATCC 700550 / JCM 31522 / CIP 106686 / LMG 19005 / NCIMB 14063 / MR-1)</name>
    <dbReference type="NCBI Taxonomy" id="211586"/>
    <lineage>
        <taxon>Bacteria</taxon>
        <taxon>Pseudomonadati</taxon>
        <taxon>Pseudomonadota</taxon>
        <taxon>Gammaproteobacteria</taxon>
        <taxon>Alteromonadales</taxon>
        <taxon>Shewanellaceae</taxon>
        <taxon>Shewanella</taxon>
    </lineage>
</organism>
<proteinExistence type="evidence at protein level"/>
<gene>
    <name type="primary">ctaA</name>
    <name type="ordered locus">SO_4613</name>
</gene>
<sequence length="330" mass="36309">MQLTWLLRITLVFTLLVILMGAYTRLSDAGLGCPDWPGCYGHIKVPTQDHELSHAQSLFPDHDIEPEKAWLEMIHRYIAGGLGLLVLCIWFLCLKTPDAPKKLPLFIVLLILFQGALGMWTVTMKLMPIVVMSHLLGGFSLISLLLLLYLRTRPRRIVASDTSVQNLAPLALVSLFVLIGQIMLGGWTSSNYAALACTALPICEGNWMDNLAIADAFSPFQGQHPSFEFGVLDYHARMTIHIAHRIGAIITASLLLLLAYRLFVSTQLKALSLLLVGLLILQVSLGISNVVMHLPLGIAVSHNGGAALLLLTLVTINYFLWHKSSSTSRV</sequence>